<proteinExistence type="inferred from homology"/>
<organism>
    <name type="scientific">Pseudomonas fluorescens (strain SBW25)</name>
    <dbReference type="NCBI Taxonomy" id="216595"/>
    <lineage>
        <taxon>Bacteria</taxon>
        <taxon>Pseudomonadati</taxon>
        <taxon>Pseudomonadota</taxon>
        <taxon>Gammaproteobacteria</taxon>
        <taxon>Pseudomonadales</taxon>
        <taxon>Pseudomonadaceae</taxon>
        <taxon>Pseudomonas</taxon>
    </lineage>
</organism>
<reference key="1">
    <citation type="journal article" date="2009" name="Genome Biol.">
        <title>Genomic and genetic analyses of diversity and plant interactions of Pseudomonas fluorescens.</title>
        <authorList>
            <person name="Silby M.W."/>
            <person name="Cerdeno-Tarraga A.M."/>
            <person name="Vernikos G.S."/>
            <person name="Giddens S.R."/>
            <person name="Jackson R.W."/>
            <person name="Preston G.M."/>
            <person name="Zhang X.-X."/>
            <person name="Moon C.D."/>
            <person name="Gehrig S.M."/>
            <person name="Godfrey S.A.C."/>
            <person name="Knight C.G."/>
            <person name="Malone J.G."/>
            <person name="Robinson Z."/>
            <person name="Spiers A.J."/>
            <person name="Harris S."/>
            <person name="Challis G.L."/>
            <person name="Yaxley A.M."/>
            <person name="Harris D."/>
            <person name="Seeger K."/>
            <person name="Murphy L."/>
            <person name="Rutter S."/>
            <person name="Squares R."/>
            <person name="Quail M.A."/>
            <person name="Saunders E."/>
            <person name="Mavromatis K."/>
            <person name="Brettin T.S."/>
            <person name="Bentley S.D."/>
            <person name="Hothersall J."/>
            <person name="Stephens E."/>
            <person name="Thomas C.M."/>
            <person name="Parkhill J."/>
            <person name="Levy S.B."/>
            <person name="Rainey P.B."/>
            <person name="Thomson N.R."/>
        </authorList>
    </citation>
    <scope>NUCLEOTIDE SEQUENCE [LARGE SCALE GENOMIC DNA]</scope>
    <source>
        <strain>SBW25</strain>
    </source>
</reference>
<name>Y879_PSEFS</name>
<sequence>MRLIIVSGRSGSGKSTALNVLEDNGFYCIDNLPAGLLPELAERALIHTELAQPLVAVSIDARNLPSHLERFPQLLEEVRAKHIHCDVLYLDADEETLLKRFSETRRRHPLSSPHRSLAEAIEDETKLLGPIIDLADLKINTTSLNLYQLRDAIKLRLLNQPEPGTAFLVESFGFKRGMPVDADLVFDVRCLPNPYWKPELRDQSGLDQPVADYLAAQPDVEEMFQDISSYLLKWLPRFAASNRAYVTIAIGCTGGHHRSVYLTERLGQVLQKTLKNVQVRHRDLS</sequence>
<evidence type="ECO:0000255" key="1">
    <source>
        <dbReference type="HAMAP-Rule" id="MF_00636"/>
    </source>
</evidence>
<protein>
    <recommendedName>
        <fullName evidence="1">Nucleotide-binding protein PFLU_0879</fullName>
    </recommendedName>
</protein>
<gene>
    <name type="ordered locus">PFLU_0879</name>
</gene>
<accession>C3K839</accession>
<keyword id="KW-0067">ATP-binding</keyword>
<keyword id="KW-0342">GTP-binding</keyword>
<keyword id="KW-0547">Nucleotide-binding</keyword>
<feature type="chain" id="PRO_0000383278" description="Nucleotide-binding protein PFLU_0879">
    <location>
        <begin position="1"/>
        <end position="285"/>
    </location>
</feature>
<feature type="binding site" evidence="1">
    <location>
        <begin position="8"/>
        <end position="15"/>
    </location>
    <ligand>
        <name>ATP</name>
        <dbReference type="ChEBI" id="CHEBI:30616"/>
    </ligand>
</feature>
<feature type="binding site" evidence="1">
    <location>
        <begin position="60"/>
        <end position="63"/>
    </location>
    <ligand>
        <name>GTP</name>
        <dbReference type="ChEBI" id="CHEBI:37565"/>
    </ligand>
</feature>
<comment type="function">
    <text evidence="1">Displays ATPase and GTPase activities.</text>
</comment>
<comment type="similarity">
    <text evidence="1">Belongs to the RapZ-like family.</text>
</comment>
<dbReference type="EMBL" id="AM181176">
    <property type="protein sequence ID" value="CAY47146.1"/>
    <property type="molecule type" value="Genomic_DNA"/>
</dbReference>
<dbReference type="SMR" id="C3K839"/>
<dbReference type="STRING" id="294.SRM1_00901"/>
<dbReference type="eggNOG" id="COG1660">
    <property type="taxonomic scope" value="Bacteria"/>
</dbReference>
<dbReference type="HOGENOM" id="CLU_059558_1_1_6"/>
<dbReference type="OrthoDB" id="9784461at2"/>
<dbReference type="GO" id="GO:0005524">
    <property type="term" value="F:ATP binding"/>
    <property type="evidence" value="ECO:0007669"/>
    <property type="project" value="UniProtKB-UniRule"/>
</dbReference>
<dbReference type="GO" id="GO:0005525">
    <property type="term" value="F:GTP binding"/>
    <property type="evidence" value="ECO:0007669"/>
    <property type="project" value="UniProtKB-UniRule"/>
</dbReference>
<dbReference type="Gene3D" id="3.40.50.300">
    <property type="entry name" value="P-loop containing nucleotide triphosphate hydrolases"/>
    <property type="match status" value="1"/>
</dbReference>
<dbReference type="HAMAP" id="MF_00636">
    <property type="entry name" value="RapZ_like"/>
    <property type="match status" value="1"/>
</dbReference>
<dbReference type="InterPro" id="IPR027417">
    <property type="entry name" value="P-loop_NTPase"/>
</dbReference>
<dbReference type="InterPro" id="IPR005337">
    <property type="entry name" value="RapZ-like"/>
</dbReference>
<dbReference type="InterPro" id="IPR053930">
    <property type="entry name" value="RapZ-like_N"/>
</dbReference>
<dbReference type="InterPro" id="IPR053931">
    <property type="entry name" value="RapZ_C"/>
</dbReference>
<dbReference type="NCBIfam" id="NF003828">
    <property type="entry name" value="PRK05416.1"/>
    <property type="match status" value="1"/>
</dbReference>
<dbReference type="PANTHER" id="PTHR30448">
    <property type="entry name" value="RNASE ADAPTER PROTEIN RAPZ"/>
    <property type="match status" value="1"/>
</dbReference>
<dbReference type="PANTHER" id="PTHR30448:SF0">
    <property type="entry name" value="RNASE ADAPTER PROTEIN RAPZ"/>
    <property type="match status" value="1"/>
</dbReference>
<dbReference type="Pfam" id="PF22740">
    <property type="entry name" value="PapZ_C"/>
    <property type="match status" value="1"/>
</dbReference>
<dbReference type="Pfam" id="PF03668">
    <property type="entry name" value="RapZ-like_N"/>
    <property type="match status" value="1"/>
</dbReference>
<dbReference type="PIRSF" id="PIRSF005052">
    <property type="entry name" value="P-loopkin"/>
    <property type="match status" value="1"/>
</dbReference>
<dbReference type="SUPFAM" id="SSF52540">
    <property type="entry name" value="P-loop containing nucleoside triphosphate hydrolases"/>
    <property type="match status" value="1"/>
</dbReference>